<organism>
    <name type="scientific">Oryzias latipes</name>
    <name type="common">Japanese rice fish</name>
    <name type="synonym">Japanese killifish</name>
    <dbReference type="NCBI Taxonomy" id="8090"/>
    <lineage>
        <taxon>Eukaryota</taxon>
        <taxon>Metazoa</taxon>
        <taxon>Chordata</taxon>
        <taxon>Craniata</taxon>
        <taxon>Vertebrata</taxon>
        <taxon>Euteleostomi</taxon>
        <taxon>Actinopterygii</taxon>
        <taxon>Neopterygii</taxon>
        <taxon>Teleostei</taxon>
        <taxon>Neoteleostei</taxon>
        <taxon>Acanthomorphata</taxon>
        <taxon>Ovalentaria</taxon>
        <taxon>Atherinomorphae</taxon>
        <taxon>Beloniformes</taxon>
        <taxon>Adrianichthyidae</taxon>
        <taxon>Oryziinae</taxon>
        <taxon>Oryzias</taxon>
    </lineage>
</organism>
<proteinExistence type="evidence at protein level"/>
<comment type="function">
    <text evidence="4">Participates in the breakdown of the egg envelope, which is derived from the egg extracellular matrix, at the time of hatching. Thus allowing the newly hatched fish to swim free. LCE solubilizes the egg envelope only after it has been swollen by the action of HCE.</text>
</comment>
<comment type="catalytic activity">
    <reaction>
        <text>Hydrolysis of the inner layer of fish egg envelope. Also hydrolysis of casein and small molecule substrates such as succinyl-Leu-Leu-Val-Tyr-|-7-(4-methyl)coumarylamide.</text>
        <dbReference type="EC" id="3.4.24.66"/>
    </reaction>
</comment>
<comment type="cofactor">
    <cofactor evidence="2">
        <name>Zn(2+)</name>
        <dbReference type="ChEBI" id="CHEBI:29105"/>
    </cofactor>
    <text evidence="2">Binds 1 zinc ion per subunit.</text>
</comment>
<comment type="subcellular location">
    <subcellularLocation>
        <location evidence="3">Zymogen granule</location>
    </subcellularLocation>
    <text evidence="3">Stored as proenzymes in the zymogen granules.</text>
</comment>
<comment type="developmental stage">
    <text evidence="3">Production of the protein starts in day 2 to day 3 embryos and increases thereafter until hatching.</text>
</comment>
<comment type="miscellaneous">
    <text evidence="4">In medaka the hatching enzyme system is composed of two distinct proteases, the high choriolytic enzyme (HCE), of which there are two isoforms, and the low choriolytic enzyme (LCE).</text>
</comment>
<evidence type="ECO:0000255" key="1"/>
<evidence type="ECO:0000255" key="2">
    <source>
        <dbReference type="PROSITE-ProRule" id="PRU01211"/>
    </source>
</evidence>
<evidence type="ECO:0000269" key="3">
    <source>
    </source>
</evidence>
<evidence type="ECO:0000303" key="4">
    <source>
    </source>
</evidence>
<evidence type="ECO:0000305" key="5"/>
<name>LCE_ORYLA</name>
<dbReference type="EC" id="3.4.24.66"/>
<dbReference type="EMBL" id="M96169">
    <property type="protein sequence ID" value="AAA49440.1"/>
    <property type="molecule type" value="mRNA"/>
</dbReference>
<dbReference type="EMBL" id="D83949">
    <property type="protein sequence ID" value="BAA20403.1"/>
    <property type="molecule type" value="Genomic_DNA"/>
</dbReference>
<dbReference type="PIR" id="A48826">
    <property type="entry name" value="A48826"/>
</dbReference>
<dbReference type="RefSeq" id="NP_001098292.1">
    <property type="nucleotide sequence ID" value="NM_001104822.1"/>
</dbReference>
<dbReference type="SMR" id="P31579"/>
<dbReference type="STRING" id="8090.ENSORLP00000018819"/>
<dbReference type="MEROPS" id="M12.006"/>
<dbReference type="GlyCosmos" id="P31579">
    <property type="glycosylation" value="3 sites, No reported glycans"/>
</dbReference>
<dbReference type="Ensembl" id="ENSORLT00000018820.2">
    <property type="protein sequence ID" value="ENSORLP00000018819.1"/>
    <property type="gene ID" value="ENSORLG00000015017.2"/>
</dbReference>
<dbReference type="GeneID" id="100049451"/>
<dbReference type="KEGG" id="ola:100049451"/>
<dbReference type="CTD" id="100303754"/>
<dbReference type="eggNOG" id="KOG3714">
    <property type="taxonomic scope" value="Eukaryota"/>
</dbReference>
<dbReference type="GeneTree" id="ENSGT00940000154856"/>
<dbReference type="InParanoid" id="P31579"/>
<dbReference type="OMA" id="NRLYKCW"/>
<dbReference type="OrthoDB" id="291007at2759"/>
<dbReference type="TreeFam" id="TF315280"/>
<dbReference type="Proteomes" id="UP000001038">
    <property type="component" value="Chromosome 24"/>
</dbReference>
<dbReference type="Proteomes" id="UP000265180">
    <property type="component" value="Unplaced"/>
</dbReference>
<dbReference type="Proteomes" id="UP000265200">
    <property type="component" value="Unplaced"/>
</dbReference>
<dbReference type="Bgee" id="ENSORLG00000015017">
    <property type="expression patterns" value="Expressed in embryo and 2 other cell types or tissues"/>
</dbReference>
<dbReference type="GO" id="GO:0042588">
    <property type="term" value="C:zymogen granule"/>
    <property type="evidence" value="ECO:0007669"/>
    <property type="project" value="UniProtKB-SubCell"/>
</dbReference>
<dbReference type="GO" id="GO:0004222">
    <property type="term" value="F:metalloendopeptidase activity"/>
    <property type="evidence" value="ECO:0000318"/>
    <property type="project" value="GO_Central"/>
</dbReference>
<dbReference type="GO" id="GO:0008270">
    <property type="term" value="F:zinc ion binding"/>
    <property type="evidence" value="ECO:0007669"/>
    <property type="project" value="InterPro"/>
</dbReference>
<dbReference type="GO" id="GO:0006508">
    <property type="term" value="P:proteolysis"/>
    <property type="evidence" value="ECO:0007669"/>
    <property type="project" value="UniProtKB-KW"/>
</dbReference>
<dbReference type="CDD" id="cd04283">
    <property type="entry name" value="ZnMc_hatching_enzyme"/>
    <property type="match status" value="1"/>
</dbReference>
<dbReference type="FunFam" id="3.40.390.10:FF:000040">
    <property type="entry name" value="Metalloendopeptidase"/>
    <property type="match status" value="1"/>
</dbReference>
<dbReference type="Gene3D" id="3.40.390.10">
    <property type="entry name" value="Collagenase (Catalytic Domain)"/>
    <property type="match status" value="1"/>
</dbReference>
<dbReference type="InterPro" id="IPR024079">
    <property type="entry name" value="MetalloPept_cat_dom_sf"/>
</dbReference>
<dbReference type="InterPro" id="IPR001506">
    <property type="entry name" value="Peptidase_M12A"/>
</dbReference>
<dbReference type="InterPro" id="IPR006026">
    <property type="entry name" value="Peptidase_Metallo"/>
</dbReference>
<dbReference type="InterPro" id="IPR034039">
    <property type="entry name" value="ZnMP_hatching_enz"/>
</dbReference>
<dbReference type="PANTHER" id="PTHR10127">
    <property type="entry name" value="DISCOIDIN, CUB, EGF, LAMININ , AND ZINC METALLOPROTEASE DOMAIN CONTAINING"/>
    <property type="match status" value="1"/>
</dbReference>
<dbReference type="PANTHER" id="PTHR10127:SF839">
    <property type="entry name" value="HATCHING ENZYME 1.2-RELATED"/>
    <property type="match status" value="1"/>
</dbReference>
<dbReference type="Pfam" id="PF01400">
    <property type="entry name" value="Astacin"/>
    <property type="match status" value="1"/>
</dbReference>
<dbReference type="PRINTS" id="PR00480">
    <property type="entry name" value="ASTACIN"/>
</dbReference>
<dbReference type="SMART" id="SM00235">
    <property type="entry name" value="ZnMc"/>
    <property type="match status" value="1"/>
</dbReference>
<dbReference type="SUPFAM" id="SSF55486">
    <property type="entry name" value="Metalloproteases ('zincins'), catalytic domain"/>
    <property type="match status" value="1"/>
</dbReference>
<dbReference type="PROSITE" id="PS51864">
    <property type="entry name" value="ASTACIN"/>
    <property type="match status" value="1"/>
</dbReference>
<dbReference type="PROSITE" id="PS00142">
    <property type="entry name" value="ZINC_PROTEASE"/>
    <property type="match status" value="1"/>
</dbReference>
<keyword id="KW-0968">Cytoplasmic vesicle</keyword>
<keyword id="KW-0903">Direct protein sequencing</keyword>
<keyword id="KW-1015">Disulfide bond</keyword>
<keyword id="KW-0325">Glycoprotein</keyword>
<keyword id="KW-0378">Hydrolase</keyword>
<keyword id="KW-0479">Metal-binding</keyword>
<keyword id="KW-0482">Metalloprotease</keyword>
<keyword id="KW-0645">Protease</keyword>
<keyword id="KW-1185">Reference proteome</keyword>
<keyword id="KW-0732">Signal</keyword>
<keyword id="KW-0862">Zinc</keyword>
<keyword id="KW-0865">Zymogen</keyword>
<sequence length="271" mass="30985">MDLLAKASVLLLLLLSLSNAQTDNMEEAENGSSKEEIDESELEDVSSIIFRMNNNSMEELLEGDLVLPKTRNAMKCFGAPDSCRWPKSSNGIVKVPYVVSDNYESDEKETIRNAMKEFAEKTCIHFVPRNNERAYLSLEPRFGCKSMMGYVGDKQVVVLQRFGCIKHAVIQHELLHALGFYHEHTRSDRDQHVKINWENIIKDFTHNFDKNDTDNLGTPYDYGSIMHYGRTAFGKDRKETITPIPNPKAAIGQTERMSDIDILRVNKLYKC</sequence>
<gene>
    <name type="primary">lce</name>
</gene>
<feature type="signal peptide">
    <location>
        <begin position="1"/>
        <end position="20"/>
    </location>
</feature>
<feature type="propeptide" id="PRO_0000028944" description="Activation peptide" evidence="3">
    <location>
        <begin position="21"/>
        <end position="71"/>
    </location>
</feature>
<feature type="chain" id="PRO_0000028945" description="Low choriolytic enzyme">
    <location>
        <begin position="72"/>
        <end position="271"/>
    </location>
</feature>
<feature type="domain" description="Peptidase M12A" evidence="2">
    <location>
        <begin position="72"/>
        <end position="271"/>
    </location>
</feature>
<feature type="active site" evidence="2">
    <location>
        <position position="173"/>
    </location>
</feature>
<feature type="binding site" evidence="2">
    <location>
        <position position="172"/>
    </location>
    <ligand>
        <name>Zn(2+)</name>
        <dbReference type="ChEBI" id="CHEBI:29105"/>
        <note>catalytic</note>
    </ligand>
</feature>
<feature type="binding site" evidence="2">
    <location>
        <position position="176"/>
    </location>
    <ligand>
        <name>Zn(2+)</name>
        <dbReference type="ChEBI" id="CHEBI:29105"/>
        <note>catalytic</note>
    </ligand>
</feature>
<feature type="binding site" evidence="2">
    <location>
        <position position="182"/>
    </location>
    <ligand>
        <name>Zn(2+)</name>
        <dbReference type="ChEBI" id="CHEBI:29105"/>
        <note>catalytic</note>
    </ligand>
</feature>
<feature type="glycosylation site" description="N-linked (GlcNAc...) asparagine" evidence="1">
    <location>
        <position position="30"/>
    </location>
</feature>
<feature type="glycosylation site" description="N-linked (GlcNAc...) asparagine" evidence="1">
    <location>
        <position position="54"/>
    </location>
</feature>
<feature type="glycosylation site" description="N-linked (GlcNAc...) asparagine" evidence="1">
    <location>
        <position position="211"/>
    </location>
</feature>
<feature type="disulfide bond" evidence="2">
    <location>
        <begin position="76"/>
        <end position="83"/>
    </location>
</feature>
<feature type="disulfide bond" evidence="2">
    <location>
        <begin position="123"/>
        <end position="271"/>
    </location>
</feature>
<feature type="disulfide bond" evidence="2">
    <location>
        <begin position="144"/>
        <end position="164"/>
    </location>
</feature>
<feature type="sequence conflict" description="In Ref. 2; BAA20403." evidence="5" ref="2">
    <original>D</original>
    <variation>V</variation>
    <location>
        <position position="38"/>
    </location>
</feature>
<feature type="sequence conflict" description="In Ref. 2; BAA20403." evidence="5" ref="2">
    <original>G</original>
    <variation>V</variation>
    <location>
        <position position="152"/>
    </location>
</feature>
<reference key="1">
    <citation type="journal article" date="1992" name="Dev. Biol.">
        <title>Isolation of cDNAs for LCE and HCE, two constituent proteases of the hatching enzyme of Oryzias latipes, and concurrent expression of their mRNAs during development.</title>
        <authorList>
            <person name="Yasumasu S."/>
            <person name="Yamada K."/>
            <person name="Akasaka K."/>
            <person name="Mitsunaga K."/>
            <person name="Iuchi I."/>
            <person name="Shimada H."/>
            <person name="Yamagami K."/>
        </authorList>
    </citation>
    <scope>NUCLEOTIDE SEQUENCE [MRNA]</scope>
    <scope>PROTEIN SEQUENCE OF 72-96</scope>
    <scope>FUNCTION</scope>
    <scope>SUBCELLULAR LOCATION</scope>
    <scope>DEVELOPMENTAL STAGE</scope>
    <scope>MISCELLANEOUS</scope>
    <source>
        <tissue>Embryo</tissue>
    </source>
</reference>
<reference key="2">
    <citation type="journal article" date="1996" name="Eur. J. Biochem.">
        <title>Different exon-intron organizations of the genes for two astacin-like proteases, high choriolytic enzyme (choriolysin H) and low choriolytic enzyme (choriolysin L), the constituents of the fish hatching enzyme.</title>
        <authorList>
            <person name="Yasumasu S."/>
            <person name="Shimada H."/>
            <person name="Inohaya K."/>
            <person name="Yamazaki K."/>
            <person name="Iuchi I."/>
            <person name="Yasumasu I."/>
            <person name="Yamagami K."/>
        </authorList>
    </citation>
    <scope>NUCLEOTIDE SEQUENCE [GENOMIC DNA]</scope>
    <source>
        <strain>DRR</strain>
    </source>
</reference>
<protein>
    <recommendedName>
        <fullName>Low choriolytic enzyme</fullName>
        <ecNumber>3.4.24.66</ecNumber>
    </recommendedName>
    <alternativeName>
        <fullName>Choriolysin L</fullName>
    </alternativeName>
    <alternativeName>
        <fullName>Hatching enzyme zinc-protease subunit LCE</fullName>
    </alternativeName>
</protein>
<accession>P31579</accession>
<accession>O13115</accession>